<protein>
    <recommendedName>
        <fullName evidence="1">Photosystem II reaction center protein L</fullName>
        <shortName evidence="1">PSII-L</shortName>
    </recommendedName>
</protein>
<accession>Q06GP5</accession>
<sequence length="38" mass="4470">MTQSNPNEQSVELNRTSLYWGLLLIFVLAVLFSNYFFN</sequence>
<geneLocation type="chloroplast"/>
<comment type="function">
    <text evidence="1">One of the components of the core complex of photosystem II (PSII). PSII is a light-driven water:plastoquinone oxidoreductase that uses light energy to abstract electrons from H(2)O, generating O(2) and a proton gradient subsequently used for ATP formation. It consists of a core antenna complex that captures photons, and an electron transfer chain that converts photonic excitation into a charge separation. This subunit is found at the monomer-monomer interface and is required for correct PSII assembly and/or dimerization.</text>
</comment>
<comment type="subunit">
    <text evidence="1">PSII is composed of 1 copy each of membrane proteins PsbA, PsbB, PsbC, PsbD, PsbE, PsbF, PsbH, PsbI, PsbJ, PsbK, PsbL, PsbM, PsbT, PsbX, PsbY, PsbZ, Psb30/Ycf12, at least 3 peripheral proteins of the oxygen-evolving complex and a large number of cofactors. It forms dimeric complexes.</text>
</comment>
<comment type="subcellular location">
    <subcellularLocation>
        <location evidence="1">Plastid</location>
        <location evidence="1">Chloroplast thylakoid membrane</location>
        <topology evidence="1">Single-pass membrane protein</topology>
    </subcellularLocation>
</comment>
<comment type="similarity">
    <text evidence="1">Belongs to the PsbL family.</text>
</comment>
<name>PSBL_PIPCE</name>
<gene>
    <name evidence="1" type="primary">psbL</name>
</gene>
<proteinExistence type="inferred from homology"/>
<organism>
    <name type="scientific">Piper cenocladum</name>
    <name type="common">Ant piper</name>
    <dbReference type="NCBI Taxonomy" id="398741"/>
    <lineage>
        <taxon>Eukaryota</taxon>
        <taxon>Viridiplantae</taxon>
        <taxon>Streptophyta</taxon>
        <taxon>Embryophyta</taxon>
        <taxon>Tracheophyta</taxon>
        <taxon>Spermatophyta</taxon>
        <taxon>Magnoliopsida</taxon>
        <taxon>Magnoliidae</taxon>
        <taxon>Piperales</taxon>
        <taxon>Piperaceae</taxon>
        <taxon>Piper</taxon>
    </lineage>
</organism>
<reference key="1">
    <citation type="journal article" date="2006" name="BMC Evol. Biol.">
        <title>Complete plastid genome sequences of Drimys, Liriodendron, and Piper: implications for the phylogenetic relationships of magnoliids.</title>
        <authorList>
            <person name="Cai Z."/>
            <person name="Penaflor C."/>
            <person name="Kuehl J.V."/>
            <person name="Leebens-Mack J."/>
            <person name="Carlson J.E."/>
            <person name="dePamphilis C.W."/>
            <person name="Boore J.L."/>
            <person name="Jansen R.K."/>
        </authorList>
    </citation>
    <scope>NUCLEOTIDE SEQUENCE [LARGE SCALE GENOMIC DNA]</scope>
</reference>
<dbReference type="EMBL" id="DQ887677">
    <property type="protein sequence ID" value="ABI14487.1"/>
    <property type="molecule type" value="Genomic_DNA"/>
</dbReference>
<dbReference type="RefSeq" id="YP_784488.1">
    <property type="nucleotide sequence ID" value="NC_008457.1"/>
</dbReference>
<dbReference type="SMR" id="Q06GP5"/>
<dbReference type="GeneID" id="4363671"/>
<dbReference type="GO" id="GO:0009535">
    <property type="term" value="C:chloroplast thylakoid membrane"/>
    <property type="evidence" value="ECO:0007669"/>
    <property type="project" value="UniProtKB-SubCell"/>
</dbReference>
<dbReference type="GO" id="GO:0009539">
    <property type="term" value="C:photosystem II reaction center"/>
    <property type="evidence" value="ECO:0007669"/>
    <property type="project" value="InterPro"/>
</dbReference>
<dbReference type="GO" id="GO:0015979">
    <property type="term" value="P:photosynthesis"/>
    <property type="evidence" value="ECO:0007669"/>
    <property type="project" value="UniProtKB-UniRule"/>
</dbReference>
<dbReference type="HAMAP" id="MF_01317">
    <property type="entry name" value="PSII_PsbL"/>
    <property type="match status" value="1"/>
</dbReference>
<dbReference type="InterPro" id="IPR003372">
    <property type="entry name" value="PSII_PsbL"/>
</dbReference>
<dbReference type="InterPro" id="IPR037266">
    <property type="entry name" value="PSII_PsbL_sf"/>
</dbReference>
<dbReference type="NCBIfam" id="NF001972">
    <property type="entry name" value="PRK00753.1"/>
    <property type="match status" value="1"/>
</dbReference>
<dbReference type="Pfam" id="PF02419">
    <property type="entry name" value="PsbL"/>
    <property type="match status" value="1"/>
</dbReference>
<dbReference type="SUPFAM" id="SSF161017">
    <property type="entry name" value="Photosystem II reaction center protein L, PsbL"/>
    <property type="match status" value="1"/>
</dbReference>
<keyword id="KW-0150">Chloroplast</keyword>
<keyword id="KW-0472">Membrane</keyword>
<keyword id="KW-0602">Photosynthesis</keyword>
<keyword id="KW-0604">Photosystem II</keyword>
<keyword id="KW-0934">Plastid</keyword>
<keyword id="KW-0674">Reaction center</keyword>
<keyword id="KW-0793">Thylakoid</keyword>
<keyword id="KW-0812">Transmembrane</keyword>
<keyword id="KW-1133">Transmembrane helix</keyword>
<evidence type="ECO:0000255" key="1">
    <source>
        <dbReference type="HAMAP-Rule" id="MF_01317"/>
    </source>
</evidence>
<feature type="chain" id="PRO_0000276218" description="Photosystem II reaction center protein L">
    <location>
        <begin position="1"/>
        <end position="38"/>
    </location>
</feature>
<feature type="transmembrane region" description="Helical" evidence="1">
    <location>
        <begin position="17"/>
        <end position="37"/>
    </location>
</feature>